<comment type="function">
    <text evidence="1">3'-to-5' exoribonuclease specific for small oligoribonucleotides.</text>
</comment>
<comment type="subcellular location">
    <subcellularLocation>
        <location evidence="1">Cytoplasm</location>
    </subcellularLocation>
</comment>
<comment type="similarity">
    <text evidence="1">Belongs to the oligoribonuclease family.</text>
</comment>
<keyword id="KW-0963">Cytoplasm</keyword>
<keyword id="KW-0269">Exonuclease</keyword>
<keyword id="KW-0378">Hydrolase</keyword>
<keyword id="KW-0540">Nuclease</keyword>
<keyword id="KW-1185">Reference proteome</keyword>
<dbReference type="EC" id="3.1.15.-" evidence="1"/>
<dbReference type="EMBL" id="CP000569">
    <property type="protein sequence ID" value="ABN74224.1"/>
    <property type="molecule type" value="Genomic_DNA"/>
</dbReference>
<dbReference type="RefSeq" id="WP_005598024.1">
    <property type="nucleotide sequence ID" value="NC_009053.1"/>
</dbReference>
<dbReference type="SMR" id="A3N1D8"/>
<dbReference type="STRING" id="416269.APL_1134"/>
<dbReference type="EnsemblBacteria" id="ABN74224">
    <property type="protein sequence ID" value="ABN74224"/>
    <property type="gene ID" value="APL_1134"/>
</dbReference>
<dbReference type="GeneID" id="48599366"/>
<dbReference type="KEGG" id="apl:APL_1134"/>
<dbReference type="eggNOG" id="COG1949">
    <property type="taxonomic scope" value="Bacteria"/>
</dbReference>
<dbReference type="HOGENOM" id="CLU_064761_2_0_6"/>
<dbReference type="Proteomes" id="UP000001432">
    <property type="component" value="Chromosome"/>
</dbReference>
<dbReference type="GO" id="GO:0005737">
    <property type="term" value="C:cytoplasm"/>
    <property type="evidence" value="ECO:0007669"/>
    <property type="project" value="UniProtKB-SubCell"/>
</dbReference>
<dbReference type="GO" id="GO:0000175">
    <property type="term" value="F:3'-5'-RNA exonuclease activity"/>
    <property type="evidence" value="ECO:0007669"/>
    <property type="project" value="InterPro"/>
</dbReference>
<dbReference type="GO" id="GO:0003676">
    <property type="term" value="F:nucleic acid binding"/>
    <property type="evidence" value="ECO:0007669"/>
    <property type="project" value="InterPro"/>
</dbReference>
<dbReference type="GO" id="GO:0006259">
    <property type="term" value="P:DNA metabolic process"/>
    <property type="evidence" value="ECO:0007669"/>
    <property type="project" value="UniProtKB-ARBA"/>
</dbReference>
<dbReference type="CDD" id="cd06135">
    <property type="entry name" value="Orn"/>
    <property type="match status" value="1"/>
</dbReference>
<dbReference type="FunFam" id="3.30.420.10:FF:000003">
    <property type="entry name" value="Oligoribonuclease"/>
    <property type="match status" value="1"/>
</dbReference>
<dbReference type="Gene3D" id="3.30.420.10">
    <property type="entry name" value="Ribonuclease H-like superfamily/Ribonuclease H"/>
    <property type="match status" value="1"/>
</dbReference>
<dbReference type="HAMAP" id="MF_00045">
    <property type="entry name" value="Oligoribonuclease"/>
    <property type="match status" value="1"/>
</dbReference>
<dbReference type="InterPro" id="IPR013520">
    <property type="entry name" value="Exonuclease_RNaseT/DNA_pol3"/>
</dbReference>
<dbReference type="InterPro" id="IPR022894">
    <property type="entry name" value="Oligoribonuclease"/>
</dbReference>
<dbReference type="InterPro" id="IPR012337">
    <property type="entry name" value="RNaseH-like_sf"/>
</dbReference>
<dbReference type="InterPro" id="IPR036397">
    <property type="entry name" value="RNaseH_sf"/>
</dbReference>
<dbReference type="NCBIfam" id="NF003765">
    <property type="entry name" value="PRK05359.1"/>
    <property type="match status" value="1"/>
</dbReference>
<dbReference type="PANTHER" id="PTHR11046">
    <property type="entry name" value="OLIGORIBONUCLEASE, MITOCHONDRIAL"/>
    <property type="match status" value="1"/>
</dbReference>
<dbReference type="PANTHER" id="PTHR11046:SF0">
    <property type="entry name" value="OLIGORIBONUCLEASE, MITOCHONDRIAL"/>
    <property type="match status" value="1"/>
</dbReference>
<dbReference type="Pfam" id="PF00929">
    <property type="entry name" value="RNase_T"/>
    <property type="match status" value="1"/>
</dbReference>
<dbReference type="SMART" id="SM00479">
    <property type="entry name" value="EXOIII"/>
    <property type="match status" value="1"/>
</dbReference>
<dbReference type="SUPFAM" id="SSF53098">
    <property type="entry name" value="Ribonuclease H-like"/>
    <property type="match status" value="1"/>
</dbReference>
<feature type="chain" id="PRO_1000004225" description="Oligoribonuclease">
    <location>
        <begin position="1"/>
        <end position="184"/>
    </location>
</feature>
<feature type="domain" description="Exonuclease" evidence="1">
    <location>
        <begin position="9"/>
        <end position="172"/>
    </location>
</feature>
<feature type="active site" evidence="1">
    <location>
        <position position="130"/>
    </location>
</feature>
<evidence type="ECO:0000255" key="1">
    <source>
        <dbReference type="HAMAP-Rule" id="MF_00045"/>
    </source>
</evidence>
<gene>
    <name evidence="1" type="primary">orn</name>
    <name type="ordered locus">APL_1134</name>
</gene>
<accession>A3N1D8</accession>
<reference key="1">
    <citation type="journal article" date="2008" name="J. Bacteriol.">
        <title>The complete genome sequence of Actinobacillus pleuropneumoniae L20 (serotype 5b).</title>
        <authorList>
            <person name="Foote S.J."/>
            <person name="Bosse J.T."/>
            <person name="Bouevitch A.B."/>
            <person name="Langford P.R."/>
            <person name="Young N.M."/>
            <person name="Nash J.H.E."/>
        </authorList>
    </citation>
    <scope>NUCLEOTIDE SEQUENCE [LARGE SCALE GENOMIC DNA]</scope>
    <source>
        <strain>L20</strain>
    </source>
</reference>
<name>ORN_ACTP2</name>
<organism>
    <name type="scientific">Actinobacillus pleuropneumoniae serotype 5b (strain L20)</name>
    <dbReference type="NCBI Taxonomy" id="416269"/>
    <lineage>
        <taxon>Bacteria</taxon>
        <taxon>Pseudomonadati</taxon>
        <taxon>Pseudomonadota</taxon>
        <taxon>Gammaproteobacteria</taxon>
        <taxon>Pasteurellales</taxon>
        <taxon>Pasteurellaceae</taxon>
        <taxon>Actinobacillus</taxon>
    </lineage>
</organism>
<proteinExistence type="inferred from homology"/>
<protein>
    <recommendedName>
        <fullName evidence="1">Oligoribonuclease</fullName>
        <ecNumber evidence="1">3.1.15.-</ecNumber>
    </recommendedName>
</protein>
<sequence>MSKLDNQNLIWIDLEMTGLDPEKERIIEVATIVTDKDLNILAEGPVLTVHQSNDLLNKMSDWCIKTHTENGLIERVKQSKLTERAVELQTIDFLKQWVPKGASPICGNSVAQDKRFLYKYMPDLADYFHYRHLDVSTLKELARRWKPDMLNAFNKKNTHLALDDIRESIEELKFYRTHFINLEK</sequence>